<protein>
    <recommendedName>
        <fullName evidence="1">tRNA N6-adenosine threonylcarbamoyltransferase</fullName>
        <ecNumber evidence="1">2.3.1.234</ecNumber>
    </recommendedName>
    <alternativeName>
        <fullName evidence="1">N6-L-threonylcarbamoyladenine synthase</fullName>
        <shortName evidence="1">t(6)A synthase</shortName>
    </alternativeName>
    <alternativeName>
        <fullName evidence="1">t(6)A37 threonylcarbamoyladenosine biosynthesis protein TsaD</fullName>
    </alternativeName>
    <alternativeName>
        <fullName evidence="1">tRNA threonylcarbamoyladenosine biosynthesis protein TsaD</fullName>
    </alternativeName>
</protein>
<reference key="1">
    <citation type="journal article" date="2007" name="PLoS Genet.">
        <title>Patterns and implications of gene gain and loss in the evolution of Prochlorococcus.</title>
        <authorList>
            <person name="Kettler G.C."/>
            <person name="Martiny A.C."/>
            <person name="Huang K."/>
            <person name="Zucker J."/>
            <person name="Coleman M.L."/>
            <person name="Rodrigue S."/>
            <person name="Chen F."/>
            <person name="Lapidus A."/>
            <person name="Ferriera S."/>
            <person name="Johnson J."/>
            <person name="Steglich C."/>
            <person name="Church G.M."/>
            <person name="Richardson P."/>
            <person name="Chisholm S.W."/>
        </authorList>
    </citation>
    <scope>NUCLEOTIDE SEQUENCE [LARGE SCALE GENOMIC DNA]</scope>
    <source>
        <strain>MIT 9515</strain>
    </source>
</reference>
<evidence type="ECO:0000255" key="1">
    <source>
        <dbReference type="HAMAP-Rule" id="MF_01445"/>
    </source>
</evidence>
<name>TSAD_PROM5</name>
<organism>
    <name type="scientific">Prochlorococcus marinus (strain MIT 9515)</name>
    <dbReference type="NCBI Taxonomy" id="167542"/>
    <lineage>
        <taxon>Bacteria</taxon>
        <taxon>Bacillati</taxon>
        <taxon>Cyanobacteriota</taxon>
        <taxon>Cyanophyceae</taxon>
        <taxon>Synechococcales</taxon>
        <taxon>Prochlorococcaceae</taxon>
        <taxon>Prochlorococcus</taxon>
    </lineage>
</organism>
<gene>
    <name evidence="1" type="primary">tsaD</name>
    <name type="synonym">gcp</name>
    <name type="ordered locus">P9515_05341</name>
</gene>
<sequence length="356" mass="38639">MLKVLAIETSCDETSVSVVSNSNDIYKIHSNIVASQIEDHSKWGGVVPELAARKHLELIPFVLEEALEESKISIEEIDAIASTVTPGLVGCLRVGSITARSLCTLYSKPFLGIHHLEGHLSSILFSKNYPKPPFLTLLVSGGHTELIKIGERRIMQRLGRSYDDAAGEAFDKVGRLLGLSYPGGPAIAEIAKKGNSLKFNLPKCKISDKKGGFLKYDFSFSGLKTAVLRLVEKIRLNGDEIPIPDIAASFERVVSEVLVERTIKCAVDYDLDNVVVVGGVAANDTLRKMMISEAGKKSIKVHLAPLNLCTDNAAMIGAAALFRLKFKAHESSLELGISGRLPIDQANTLYANKPPF</sequence>
<proteinExistence type="inferred from homology"/>
<comment type="function">
    <text evidence="1">Required for the formation of a threonylcarbamoyl group on adenosine at position 37 (t(6)A37) in tRNAs that read codons beginning with adenine. Is involved in the transfer of the threonylcarbamoyl moiety of threonylcarbamoyl-AMP (TC-AMP) to the N6 group of A37, together with TsaE and TsaB. TsaD likely plays a direct catalytic role in this reaction.</text>
</comment>
<comment type="catalytic activity">
    <reaction evidence="1">
        <text>L-threonylcarbamoyladenylate + adenosine(37) in tRNA = N(6)-L-threonylcarbamoyladenosine(37) in tRNA + AMP + H(+)</text>
        <dbReference type="Rhea" id="RHEA:37059"/>
        <dbReference type="Rhea" id="RHEA-COMP:10162"/>
        <dbReference type="Rhea" id="RHEA-COMP:10163"/>
        <dbReference type="ChEBI" id="CHEBI:15378"/>
        <dbReference type="ChEBI" id="CHEBI:73682"/>
        <dbReference type="ChEBI" id="CHEBI:74411"/>
        <dbReference type="ChEBI" id="CHEBI:74418"/>
        <dbReference type="ChEBI" id="CHEBI:456215"/>
        <dbReference type="EC" id="2.3.1.234"/>
    </reaction>
</comment>
<comment type="cofactor">
    <cofactor evidence="1">
        <name>Fe(2+)</name>
        <dbReference type="ChEBI" id="CHEBI:29033"/>
    </cofactor>
    <text evidence="1">Binds 1 Fe(2+) ion per subunit.</text>
</comment>
<comment type="subcellular location">
    <subcellularLocation>
        <location evidence="1">Cytoplasm</location>
    </subcellularLocation>
</comment>
<comment type="similarity">
    <text evidence="1">Belongs to the KAE1 / TsaD family.</text>
</comment>
<accession>A2BVD2</accession>
<feature type="chain" id="PRO_0000303483" description="tRNA N6-adenosine threonylcarbamoyltransferase">
    <location>
        <begin position="1"/>
        <end position="356"/>
    </location>
</feature>
<feature type="binding site" evidence="1">
    <location>
        <position position="115"/>
    </location>
    <ligand>
        <name>Fe cation</name>
        <dbReference type="ChEBI" id="CHEBI:24875"/>
    </ligand>
</feature>
<feature type="binding site" evidence="1">
    <location>
        <position position="119"/>
    </location>
    <ligand>
        <name>Fe cation</name>
        <dbReference type="ChEBI" id="CHEBI:24875"/>
    </ligand>
</feature>
<feature type="binding site" evidence="1">
    <location>
        <begin position="138"/>
        <end position="142"/>
    </location>
    <ligand>
        <name>substrate</name>
    </ligand>
</feature>
<feature type="binding site" evidence="1">
    <location>
        <position position="171"/>
    </location>
    <ligand>
        <name>substrate</name>
    </ligand>
</feature>
<feature type="binding site" evidence="1">
    <location>
        <position position="184"/>
    </location>
    <ligand>
        <name>substrate</name>
    </ligand>
</feature>
<feature type="binding site" evidence="1">
    <location>
        <position position="283"/>
    </location>
    <ligand>
        <name>substrate</name>
    </ligand>
</feature>
<feature type="binding site" evidence="1">
    <location>
        <position position="311"/>
    </location>
    <ligand>
        <name>Fe cation</name>
        <dbReference type="ChEBI" id="CHEBI:24875"/>
    </ligand>
</feature>
<keyword id="KW-0012">Acyltransferase</keyword>
<keyword id="KW-0963">Cytoplasm</keyword>
<keyword id="KW-0408">Iron</keyword>
<keyword id="KW-0479">Metal-binding</keyword>
<keyword id="KW-0808">Transferase</keyword>
<keyword id="KW-0819">tRNA processing</keyword>
<dbReference type="EC" id="2.3.1.234" evidence="1"/>
<dbReference type="EMBL" id="CP000552">
    <property type="protein sequence ID" value="ABM71743.1"/>
    <property type="molecule type" value="Genomic_DNA"/>
</dbReference>
<dbReference type="RefSeq" id="WP_011819851.1">
    <property type="nucleotide sequence ID" value="NC_008817.1"/>
</dbReference>
<dbReference type="SMR" id="A2BVD2"/>
<dbReference type="STRING" id="167542.P9515_05341"/>
<dbReference type="GeneID" id="60201101"/>
<dbReference type="KEGG" id="pmc:P9515_05341"/>
<dbReference type="eggNOG" id="COG0533">
    <property type="taxonomic scope" value="Bacteria"/>
</dbReference>
<dbReference type="HOGENOM" id="CLU_023208_0_2_3"/>
<dbReference type="OrthoDB" id="9806197at2"/>
<dbReference type="Proteomes" id="UP000001589">
    <property type="component" value="Chromosome"/>
</dbReference>
<dbReference type="GO" id="GO:0005737">
    <property type="term" value="C:cytoplasm"/>
    <property type="evidence" value="ECO:0007669"/>
    <property type="project" value="UniProtKB-SubCell"/>
</dbReference>
<dbReference type="GO" id="GO:0005506">
    <property type="term" value="F:iron ion binding"/>
    <property type="evidence" value="ECO:0007669"/>
    <property type="project" value="UniProtKB-UniRule"/>
</dbReference>
<dbReference type="GO" id="GO:0061711">
    <property type="term" value="F:N(6)-L-threonylcarbamoyladenine synthase activity"/>
    <property type="evidence" value="ECO:0007669"/>
    <property type="project" value="UniProtKB-EC"/>
</dbReference>
<dbReference type="GO" id="GO:0002949">
    <property type="term" value="P:tRNA threonylcarbamoyladenosine modification"/>
    <property type="evidence" value="ECO:0007669"/>
    <property type="project" value="UniProtKB-UniRule"/>
</dbReference>
<dbReference type="FunFam" id="3.30.420.40:FF:000012">
    <property type="entry name" value="tRNA N6-adenosine threonylcarbamoyltransferase"/>
    <property type="match status" value="1"/>
</dbReference>
<dbReference type="FunFam" id="3.30.420.40:FF:000040">
    <property type="entry name" value="tRNA N6-adenosine threonylcarbamoyltransferase"/>
    <property type="match status" value="1"/>
</dbReference>
<dbReference type="Gene3D" id="3.30.420.40">
    <property type="match status" value="2"/>
</dbReference>
<dbReference type="HAMAP" id="MF_01445">
    <property type="entry name" value="TsaD"/>
    <property type="match status" value="1"/>
</dbReference>
<dbReference type="InterPro" id="IPR043129">
    <property type="entry name" value="ATPase_NBD"/>
</dbReference>
<dbReference type="InterPro" id="IPR000905">
    <property type="entry name" value="Gcp-like_dom"/>
</dbReference>
<dbReference type="InterPro" id="IPR017861">
    <property type="entry name" value="KAE1/TsaD"/>
</dbReference>
<dbReference type="InterPro" id="IPR022450">
    <property type="entry name" value="TsaD"/>
</dbReference>
<dbReference type="NCBIfam" id="TIGR00329">
    <property type="entry name" value="gcp_kae1"/>
    <property type="match status" value="1"/>
</dbReference>
<dbReference type="NCBIfam" id="TIGR03723">
    <property type="entry name" value="T6A_TsaD_YgjD"/>
    <property type="match status" value="1"/>
</dbReference>
<dbReference type="PANTHER" id="PTHR11735">
    <property type="entry name" value="TRNA N6-ADENOSINE THREONYLCARBAMOYLTRANSFERASE"/>
    <property type="match status" value="1"/>
</dbReference>
<dbReference type="PANTHER" id="PTHR11735:SF6">
    <property type="entry name" value="TRNA N6-ADENOSINE THREONYLCARBAMOYLTRANSFERASE, MITOCHONDRIAL"/>
    <property type="match status" value="1"/>
</dbReference>
<dbReference type="Pfam" id="PF00814">
    <property type="entry name" value="TsaD"/>
    <property type="match status" value="1"/>
</dbReference>
<dbReference type="PRINTS" id="PR00789">
    <property type="entry name" value="OSIALOPTASE"/>
</dbReference>
<dbReference type="SUPFAM" id="SSF53067">
    <property type="entry name" value="Actin-like ATPase domain"/>
    <property type="match status" value="2"/>
</dbReference>